<comment type="catalytic activity">
    <reaction evidence="1">
        <text>1-(5-phospho-beta-D-ribosyl)-5-[(5-phospho-beta-D-ribosylamino)methylideneamino]imidazole-4-carboxamide = 5-[(5-phospho-1-deoxy-D-ribulos-1-ylimino)methylamino]-1-(5-phospho-beta-D-ribosyl)imidazole-4-carboxamide</text>
        <dbReference type="Rhea" id="RHEA:15469"/>
        <dbReference type="ChEBI" id="CHEBI:58435"/>
        <dbReference type="ChEBI" id="CHEBI:58525"/>
        <dbReference type="EC" id="5.3.1.16"/>
    </reaction>
</comment>
<comment type="pathway">
    <text evidence="1">Amino-acid biosynthesis; L-histidine biosynthesis; L-histidine from 5-phospho-alpha-D-ribose 1-diphosphate: step 4/9.</text>
</comment>
<comment type="subcellular location">
    <subcellularLocation>
        <location evidence="1">Cytoplasm</location>
    </subcellularLocation>
</comment>
<comment type="similarity">
    <text evidence="1">Belongs to the HisA/HisF family.</text>
</comment>
<keyword id="KW-0028">Amino-acid biosynthesis</keyword>
<keyword id="KW-0963">Cytoplasm</keyword>
<keyword id="KW-0368">Histidine biosynthesis</keyword>
<keyword id="KW-0413">Isomerase</keyword>
<protein>
    <recommendedName>
        <fullName evidence="1">1-(5-phosphoribosyl)-5-[(5-phosphoribosylamino)methylideneamino] imidazole-4-carboxamide isomerase</fullName>
        <ecNumber evidence="1">5.3.1.16</ecNumber>
    </recommendedName>
    <alternativeName>
        <fullName evidence="1">Phosphoribosylformimino-5-aminoimidazole carboxamide ribotide isomerase</fullName>
    </alternativeName>
</protein>
<organism>
    <name type="scientific">Moorella thermoacetica (strain ATCC 39073 / JCM 9320)</name>
    <dbReference type="NCBI Taxonomy" id="264732"/>
    <lineage>
        <taxon>Bacteria</taxon>
        <taxon>Bacillati</taxon>
        <taxon>Bacillota</taxon>
        <taxon>Clostridia</taxon>
        <taxon>Moorellales</taxon>
        <taxon>Moorellaceae</taxon>
        <taxon>Moorella</taxon>
    </lineage>
</organism>
<name>HIS4_MOOTA</name>
<gene>
    <name evidence="1" type="primary">hisA</name>
    <name type="ordered locus">Moth_2032</name>
</gene>
<dbReference type="EC" id="5.3.1.16" evidence="1"/>
<dbReference type="EMBL" id="CP000232">
    <property type="protein sequence ID" value="ABC20328.1"/>
    <property type="molecule type" value="Genomic_DNA"/>
</dbReference>
<dbReference type="RefSeq" id="YP_430871.1">
    <property type="nucleotide sequence ID" value="NC_007644.1"/>
</dbReference>
<dbReference type="SMR" id="Q2RGW1"/>
<dbReference type="STRING" id="264732.Moth_2032"/>
<dbReference type="EnsemblBacteria" id="ABC20328">
    <property type="protein sequence ID" value="ABC20328"/>
    <property type="gene ID" value="Moth_2032"/>
</dbReference>
<dbReference type="KEGG" id="mta:Moth_2032"/>
<dbReference type="PATRIC" id="fig|264732.11.peg.2207"/>
<dbReference type="eggNOG" id="COG0106">
    <property type="taxonomic scope" value="Bacteria"/>
</dbReference>
<dbReference type="HOGENOM" id="CLU_048577_1_1_9"/>
<dbReference type="OrthoDB" id="9807749at2"/>
<dbReference type="UniPathway" id="UPA00031">
    <property type="reaction ID" value="UER00009"/>
</dbReference>
<dbReference type="GO" id="GO:0005737">
    <property type="term" value="C:cytoplasm"/>
    <property type="evidence" value="ECO:0007669"/>
    <property type="project" value="UniProtKB-SubCell"/>
</dbReference>
<dbReference type="GO" id="GO:0003949">
    <property type="term" value="F:1-(5-phosphoribosyl)-5-[(5-phosphoribosylamino)methylideneamino]imidazole-4-carboxamide isomerase activity"/>
    <property type="evidence" value="ECO:0007669"/>
    <property type="project" value="UniProtKB-UniRule"/>
</dbReference>
<dbReference type="GO" id="GO:0000105">
    <property type="term" value="P:L-histidine biosynthetic process"/>
    <property type="evidence" value="ECO:0007669"/>
    <property type="project" value="UniProtKB-UniRule"/>
</dbReference>
<dbReference type="GO" id="GO:0000162">
    <property type="term" value="P:L-tryptophan biosynthetic process"/>
    <property type="evidence" value="ECO:0007669"/>
    <property type="project" value="TreeGrafter"/>
</dbReference>
<dbReference type="CDD" id="cd04732">
    <property type="entry name" value="HisA"/>
    <property type="match status" value="1"/>
</dbReference>
<dbReference type="FunFam" id="3.20.20.70:FF:000009">
    <property type="entry name" value="1-(5-phosphoribosyl)-5-[(5-phosphoribosylamino)methylideneamino] imidazole-4-carboxamide isomerase"/>
    <property type="match status" value="1"/>
</dbReference>
<dbReference type="Gene3D" id="3.20.20.70">
    <property type="entry name" value="Aldolase class I"/>
    <property type="match status" value="1"/>
</dbReference>
<dbReference type="HAMAP" id="MF_01014">
    <property type="entry name" value="HisA"/>
    <property type="match status" value="1"/>
</dbReference>
<dbReference type="InterPro" id="IPR013785">
    <property type="entry name" value="Aldolase_TIM"/>
</dbReference>
<dbReference type="InterPro" id="IPR006062">
    <property type="entry name" value="His_biosynth"/>
</dbReference>
<dbReference type="InterPro" id="IPR006063">
    <property type="entry name" value="HisA_bact_arch"/>
</dbReference>
<dbReference type="InterPro" id="IPR044524">
    <property type="entry name" value="Isoase_HisA-like"/>
</dbReference>
<dbReference type="InterPro" id="IPR023016">
    <property type="entry name" value="Isoase_HisA-like_bact"/>
</dbReference>
<dbReference type="InterPro" id="IPR011060">
    <property type="entry name" value="RibuloseP-bd_barrel"/>
</dbReference>
<dbReference type="NCBIfam" id="TIGR00007">
    <property type="entry name" value="1-(5-phosphoribosyl)-5-[(5-phosphoribosylamino)methylideneamino]imidazole-4-carboxamide isomerase"/>
    <property type="match status" value="1"/>
</dbReference>
<dbReference type="PANTHER" id="PTHR43090">
    <property type="entry name" value="1-(5-PHOSPHORIBOSYL)-5-[(5-PHOSPHORIBOSYLAMINO)METHYLIDENEAMINO] IMIDAZOLE-4-CARBOXAMIDE ISOMERASE"/>
    <property type="match status" value="1"/>
</dbReference>
<dbReference type="PANTHER" id="PTHR43090:SF2">
    <property type="entry name" value="1-(5-PHOSPHORIBOSYL)-5-[(5-PHOSPHORIBOSYLAMINO)METHYLIDENEAMINO] IMIDAZOLE-4-CARBOXAMIDE ISOMERASE"/>
    <property type="match status" value="1"/>
</dbReference>
<dbReference type="Pfam" id="PF00977">
    <property type="entry name" value="His_biosynth"/>
    <property type="match status" value="1"/>
</dbReference>
<dbReference type="SUPFAM" id="SSF51366">
    <property type="entry name" value="Ribulose-phoshate binding barrel"/>
    <property type="match status" value="1"/>
</dbReference>
<evidence type="ECO:0000255" key="1">
    <source>
        <dbReference type="HAMAP-Rule" id="MF_01014"/>
    </source>
</evidence>
<accession>Q2RGW1</accession>
<feature type="chain" id="PRO_0000229061" description="1-(5-phosphoribosyl)-5-[(5-phosphoribosylamino)methylideneamino] imidazole-4-carboxamide isomerase">
    <location>
        <begin position="1"/>
        <end position="243"/>
    </location>
</feature>
<feature type="active site" description="Proton acceptor" evidence="1">
    <location>
        <position position="8"/>
    </location>
</feature>
<feature type="active site" description="Proton donor" evidence="1">
    <location>
        <position position="129"/>
    </location>
</feature>
<sequence>MLVMPAIDLREGRCVRLYQGRIEAETVYSTDPVAVARGWVERGARWLHVVDLDGAFAGRPRNLEVIAAIIRAAGVPVQVGGGIRSLESLAGVLAAGASRVVLGTVAITNPEVVATAVERYGERVVVGIDSLDGQVAIEGWEATVARGAVEFARQMASLGVTRAVFTDIGRDGTLQGPNIAATREMARSGGLKIIASGGIASLDDLRKLKELAAEGVEGAILGRSLYNGNFTLEEALAVAADGD</sequence>
<reference key="1">
    <citation type="journal article" date="2008" name="Environ. Microbiol.">
        <title>The complete genome sequence of Moorella thermoacetica (f. Clostridium thermoaceticum).</title>
        <authorList>
            <person name="Pierce E."/>
            <person name="Xie G."/>
            <person name="Barabote R.D."/>
            <person name="Saunders E."/>
            <person name="Han C.S."/>
            <person name="Detter J.C."/>
            <person name="Richardson P."/>
            <person name="Brettin T.S."/>
            <person name="Das A."/>
            <person name="Ljungdahl L.G."/>
            <person name="Ragsdale S.W."/>
        </authorList>
    </citation>
    <scope>NUCLEOTIDE SEQUENCE [LARGE SCALE GENOMIC DNA]</scope>
    <source>
        <strain>ATCC 39073 / JCM 9320</strain>
    </source>
</reference>
<proteinExistence type="inferred from homology"/>